<organism>
    <name type="scientific">Cupriavidus metallidurans (strain ATCC 43123 / DSM 2839 / NBRC 102507 / CH34)</name>
    <name type="common">Ralstonia metallidurans</name>
    <dbReference type="NCBI Taxonomy" id="266264"/>
    <lineage>
        <taxon>Bacteria</taxon>
        <taxon>Pseudomonadati</taxon>
        <taxon>Pseudomonadota</taxon>
        <taxon>Betaproteobacteria</taxon>
        <taxon>Burkholderiales</taxon>
        <taxon>Burkholderiaceae</taxon>
        <taxon>Cupriavidus</taxon>
    </lineage>
</organism>
<accession>Q1LIT8</accession>
<evidence type="ECO:0000255" key="1">
    <source>
        <dbReference type="HAMAP-Rule" id="MF_00735"/>
    </source>
</evidence>
<name>PRMA_CUPMC</name>
<dbReference type="EC" id="2.1.1.-" evidence="1"/>
<dbReference type="EMBL" id="CP000352">
    <property type="protein sequence ID" value="ABF09938.1"/>
    <property type="molecule type" value="Genomic_DNA"/>
</dbReference>
<dbReference type="RefSeq" id="WP_011517566.1">
    <property type="nucleotide sequence ID" value="NC_007973.1"/>
</dbReference>
<dbReference type="SMR" id="Q1LIT8"/>
<dbReference type="STRING" id="266264.Rmet_3066"/>
<dbReference type="KEGG" id="rme:Rmet_3066"/>
<dbReference type="eggNOG" id="COG2264">
    <property type="taxonomic scope" value="Bacteria"/>
</dbReference>
<dbReference type="HOGENOM" id="CLU_049382_4_1_4"/>
<dbReference type="Proteomes" id="UP000002429">
    <property type="component" value="Chromosome"/>
</dbReference>
<dbReference type="GO" id="GO:0005829">
    <property type="term" value="C:cytosol"/>
    <property type="evidence" value="ECO:0007669"/>
    <property type="project" value="TreeGrafter"/>
</dbReference>
<dbReference type="GO" id="GO:0016279">
    <property type="term" value="F:protein-lysine N-methyltransferase activity"/>
    <property type="evidence" value="ECO:0007669"/>
    <property type="project" value="TreeGrafter"/>
</dbReference>
<dbReference type="GO" id="GO:0032259">
    <property type="term" value="P:methylation"/>
    <property type="evidence" value="ECO:0007669"/>
    <property type="project" value="UniProtKB-KW"/>
</dbReference>
<dbReference type="CDD" id="cd02440">
    <property type="entry name" value="AdoMet_MTases"/>
    <property type="match status" value="1"/>
</dbReference>
<dbReference type="Gene3D" id="3.40.50.150">
    <property type="entry name" value="Vaccinia Virus protein VP39"/>
    <property type="match status" value="1"/>
</dbReference>
<dbReference type="HAMAP" id="MF_00735">
    <property type="entry name" value="Methyltr_PrmA"/>
    <property type="match status" value="1"/>
</dbReference>
<dbReference type="InterPro" id="IPR050078">
    <property type="entry name" value="Ribosomal_L11_MeTrfase_PrmA"/>
</dbReference>
<dbReference type="InterPro" id="IPR004498">
    <property type="entry name" value="Ribosomal_PrmA_MeTrfase"/>
</dbReference>
<dbReference type="InterPro" id="IPR029063">
    <property type="entry name" value="SAM-dependent_MTases_sf"/>
</dbReference>
<dbReference type="NCBIfam" id="TIGR00406">
    <property type="entry name" value="prmA"/>
    <property type="match status" value="1"/>
</dbReference>
<dbReference type="PANTHER" id="PTHR43648">
    <property type="entry name" value="ELECTRON TRANSFER FLAVOPROTEIN BETA SUBUNIT LYSINE METHYLTRANSFERASE"/>
    <property type="match status" value="1"/>
</dbReference>
<dbReference type="PANTHER" id="PTHR43648:SF1">
    <property type="entry name" value="ELECTRON TRANSFER FLAVOPROTEIN BETA SUBUNIT LYSINE METHYLTRANSFERASE"/>
    <property type="match status" value="1"/>
</dbReference>
<dbReference type="Pfam" id="PF06325">
    <property type="entry name" value="PrmA"/>
    <property type="match status" value="1"/>
</dbReference>
<dbReference type="PIRSF" id="PIRSF000401">
    <property type="entry name" value="RPL11_MTase"/>
    <property type="match status" value="1"/>
</dbReference>
<dbReference type="SUPFAM" id="SSF53335">
    <property type="entry name" value="S-adenosyl-L-methionine-dependent methyltransferases"/>
    <property type="match status" value="1"/>
</dbReference>
<reference key="1">
    <citation type="journal article" date="2010" name="PLoS ONE">
        <title>The complete genome sequence of Cupriavidus metallidurans strain CH34, a master survivalist in harsh and anthropogenic environments.</title>
        <authorList>
            <person name="Janssen P.J."/>
            <person name="Van Houdt R."/>
            <person name="Moors H."/>
            <person name="Monsieurs P."/>
            <person name="Morin N."/>
            <person name="Michaux A."/>
            <person name="Benotmane M.A."/>
            <person name="Leys N."/>
            <person name="Vallaeys T."/>
            <person name="Lapidus A."/>
            <person name="Monchy S."/>
            <person name="Medigue C."/>
            <person name="Taghavi S."/>
            <person name="McCorkle S."/>
            <person name="Dunn J."/>
            <person name="van der Lelie D."/>
            <person name="Mergeay M."/>
        </authorList>
    </citation>
    <scope>NUCLEOTIDE SEQUENCE [LARGE SCALE GENOMIC DNA]</scope>
    <source>
        <strain>ATCC 43123 / DSM 2839 / NBRC 102507 / CH34</strain>
    </source>
</reference>
<proteinExistence type="inferred from homology"/>
<sequence>MAFQECVIEIAQEQAEAWSDALFDLGALSVSVEDADADTPDEQPLFGEPGLEPTRLAWNRSRVVALFDEETDPALVVTAAANALKVDPVPPYALRGVEDQDWVRLTQSQFEPIRIGEKIWVVPSWHDAPDPDAVILELDPGLAFGTGSHPTTRLCMQWLEANVRAGETVLDYGCGSGILAIVAKKLGAGDTVGIDIDPNAVDASRYNAERNRVEASFALPESVSEATYDLVVANILSNPLKLMAAMLSARVRPGGRLILSGVLERQAEEVAAAYAPWIPMSVWRSEEGWVCLHGTRPAAPADRS</sequence>
<protein>
    <recommendedName>
        <fullName evidence="1">Ribosomal protein L11 methyltransferase</fullName>
        <shortName evidence="1">L11 Mtase</shortName>
        <ecNumber evidence="1">2.1.1.-</ecNumber>
    </recommendedName>
</protein>
<feature type="chain" id="PRO_1000046077" description="Ribosomal protein L11 methyltransferase">
    <location>
        <begin position="1"/>
        <end position="304"/>
    </location>
</feature>
<feature type="binding site" evidence="1">
    <location>
        <position position="152"/>
    </location>
    <ligand>
        <name>S-adenosyl-L-methionine</name>
        <dbReference type="ChEBI" id="CHEBI:59789"/>
    </ligand>
</feature>
<feature type="binding site" evidence="1">
    <location>
        <position position="173"/>
    </location>
    <ligand>
        <name>S-adenosyl-L-methionine</name>
        <dbReference type="ChEBI" id="CHEBI:59789"/>
    </ligand>
</feature>
<feature type="binding site" evidence="1">
    <location>
        <position position="195"/>
    </location>
    <ligand>
        <name>S-adenosyl-L-methionine</name>
        <dbReference type="ChEBI" id="CHEBI:59789"/>
    </ligand>
</feature>
<feature type="binding site" evidence="1">
    <location>
        <position position="234"/>
    </location>
    <ligand>
        <name>S-adenosyl-L-methionine</name>
        <dbReference type="ChEBI" id="CHEBI:59789"/>
    </ligand>
</feature>
<gene>
    <name evidence="1" type="primary">prmA</name>
    <name type="ordered locus">Rmet_3066</name>
</gene>
<keyword id="KW-0963">Cytoplasm</keyword>
<keyword id="KW-0489">Methyltransferase</keyword>
<keyword id="KW-1185">Reference proteome</keyword>
<keyword id="KW-0949">S-adenosyl-L-methionine</keyword>
<keyword id="KW-0808">Transferase</keyword>
<comment type="function">
    <text evidence="1">Methylates ribosomal protein L11.</text>
</comment>
<comment type="catalytic activity">
    <reaction evidence="1">
        <text>L-lysyl-[protein] + 3 S-adenosyl-L-methionine = N(6),N(6),N(6)-trimethyl-L-lysyl-[protein] + 3 S-adenosyl-L-homocysteine + 3 H(+)</text>
        <dbReference type="Rhea" id="RHEA:54192"/>
        <dbReference type="Rhea" id="RHEA-COMP:9752"/>
        <dbReference type="Rhea" id="RHEA-COMP:13826"/>
        <dbReference type="ChEBI" id="CHEBI:15378"/>
        <dbReference type="ChEBI" id="CHEBI:29969"/>
        <dbReference type="ChEBI" id="CHEBI:57856"/>
        <dbReference type="ChEBI" id="CHEBI:59789"/>
        <dbReference type="ChEBI" id="CHEBI:61961"/>
    </reaction>
</comment>
<comment type="subcellular location">
    <subcellularLocation>
        <location evidence="1">Cytoplasm</location>
    </subcellularLocation>
</comment>
<comment type="similarity">
    <text evidence="1">Belongs to the methyltransferase superfamily. PrmA family.</text>
</comment>